<dbReference type="EMBL" id="HE600906">
    <property type="protein sequence ID" value="CAP24624.1"/>
    <property type="molecule type" value="Genomic_DNA"/>
</dbReference>
<dbReference type="SMR" id="A8WWR3"/>
<dbReference type="FunCoup" id="A8WWR3">
    <property type="interactions" value="1009"/>
</dbReference>
<dbReference type="STRING" id="6238.A8WWR3"/>
<dbReference type="GlyCosmos" id="A8WWR3">
    <property type="glycosylation" value="2 sites, No reported glycans"/>
</dbReference>
<dbReference type="EnsemblMetazoa" id="CBG03795.1">
    <property type="protein sequence ID" value="CBG03795.1"/>
    <property type="gene ID" value="WBGene00026578"/>
</dbReference>
<dbReference type="KEGG" id="cbr:CBG_03795"/>
<dbReference type="CTD" id="8581231"/>
<dbReference type="WormBase" id="CBG03795">
    <property type="protein sequence ID" value="CBP14918"/>
    <property type="gene ID" value="WBGene00026578"/>
    <property type="gene designation" value="Cbr-hrdl-1"/>
</dbReference>
<dbReference type="eggNOG" id="KOG0802">
    <property type="taxonomic scope" value="Eukaryota"/>
</dbReference>
<dbReference type="HOGENOM" id="CLU_015061_1_0_1"/>
<dbReference type="InParanoid" id="A8WWR3"/>
<dbReference type="OMA" id="EWKINAT"/>
<dbReference type="Proteomes" id="UP000008549">
    <property type="component" value="Unassembled WGS sequence"/>
</dbReference>
<dbReference type="GO" id="GO:0005829">
    <property type="term" value="C:cytosol"/>
    <property type="evidence" value="ECO:0000318"/>
    <property type="project" value="GO_Central"/>
</dbReference>
<dbReference type="GO" id="GO:0005783">
    <property type="term" value="C:endoplasmic reticulum"/>
    <property type="evidence" value="ECO:0000318"/>
    <property type="project" value="GO_Central"/>
</dbReference>
<dbReference type="GO" id="GO:0016020">
    <property type="term" value="C:membrane"/>
    <property type="evidence" value="ECO:0007669"/>
    <property type="project" value="UniProtKB-SubCell"/>
</dbReference>
<dbReference type="GO" id="GO:0000151">
    <property type="term" value="C:ubiquitin ligase complex"/>
    <property type="evidence" value="ECO:0000318"/>
    <property type="project" value="GO_Central"/>
</dbReference>
<dbReference type="GO" id="GO:0043130">
    <property type="term" value="F:ubiquitin binding"/>
    <property type="evidence" value="ECO:0007669"/>
    <property type="project" value="InterPro"/>
</dbReference>
<dbReference type="GO" id="GO:0061630">
    <property type="term" value="F:ubiquitin protein ligase activity"/>
    <property type="evidence" value="ECO:0000318"/>
    <property type="project" value="GO_Central"/>
</dbReference>
<dbReference type="GO" id="GO:0008270">
    <property type="term" value="F:zinc ion binding"/>
    <property type="evidence" value="ECO:0007669"/>
    <property type="project" value="UniProtKB-KW"/>
</dbReference>
<dbReference type="GO" id="GO:0030968">
    <property type="term" value="P:endoplasmic reticulum unfolded protein response"/>
    <property type="evidence" value="ECO:0000318"/>
    <property type="project" value="GO_Central"/>
</dbReference>
<dbReference type="GO" id="GO:0035264">
    <property type="term" value="P:multicellular organism growth"/>
    <property type="evidence" value="ECO:0007669"/>
    <property type="project" value="EnsemblMetazoa"/>
</dbReference>
<dbReference type="GO" id="GO:0070936">
    <property type="term" value="P:protein K48-linked ubiquitination"/>
    <property type="evidence" value="ECO:0000318"/>
    <property type="project" value="GO_Central"/>
</dbReference>
<dbReference type="GO" id="GO:0006511">
    <property type="term" value="P:ubiquitin-dependent protein catabolic process"/>
    <property type="evidence" value="ECO:0000318"/>
    <property type="project" value="GO_Central"/>
</dbReference>
<dbReference type="CDD" id="cd14421">
    <property type="entry name" value="CUE_AMFR"/>
    <property type="match status" value="1"/>
</dbReference>
<dbReference type="Gene3D" id="1.10.8.10">
    <property type="entry name" value="DNA helicase RuvA subunit, C-terminal domain"/>
    <property type="match status" value="1"/>
</dbReference>
<dbReference type="Gene3D" id="3.30.40.10">
    <property type="entry name" value="Zinc/RING finger domain, C3HC4 (zinc finger)"/>
    <property type="match status" value="1"/>
</dbReference>
<dbReference type="InterPro" id="IPR003892">
    <property type="entry name" value="CUE"/>
</dbReference>
<dbReference type="InterPro" id="IPR001841">
    <property type="entry name" value="Znf_RING"/>
</dbReference>
<dbReference type="InterPro" id="IPR013083">
    <property type="entry name" value="Znf_RING/FYVE/PHD"/>
</dbReference>
<dbReference type="PANTHER" id="PTHR15067:SF5">
    <property type="entry name" value="E3 UBIQUITIN-PROTEIN LIGASE AMFR"/>
    <property type="match status" value="1"/>
</dbReference>
<dbReference type="PANTHER" id="PTHR15067">
    <property type="entry name" value="E3 UBIQUITIN-PROTEIN LIGASE RNF8"/>
    <property type="match status" value="1"/>
</dbReference>
<dbReference type="Pfam" id="PF02845">
    <property type="entry name" value="CUE"/>
    <property type="match status" value="1"/>
</dbReference>
<dbReference type="Pfam" id="PF13639">
    <property type="entry name" value="zf-RING_2"/>
    <property type="match status" value="1"/>
</dbReference>
<dbReference type="SMART" id="SM00546">
    <property type="entry name" value="CUE"/>
    <property type="match status" value="1"/>
</dbReference>
<dbReference type="SMART" id="SM00184">
    <property type="entry name" value="RING"/>
    <property type="match status" value="1"/>
</dbReference>
<dbReference type="SUPFAM" id="SSF57850">
    <property type="entry name" value="RING/U-box"/>
    <property type="match status" value="1"/>
</dbReference>
<dbReference type="PROSITE" id="PS51140">
    <property type="entry name" value="CUE"/>
    <property type="match status" value="1"/>
</dbReference>
<dbReference type="PROSITE" id="PS50089">
    <property type="entry name" value="ZF_RING_2"/>
    <property type="match status" value="1"/>
</dbReference>
<protein>
    <recommendedName>
        <fullName>E3 ubiquitin-protein ligase hrd-like protein 1</fullName>
    </recommendedName>
</protein>
<sequence>MNRGNPQALRHPQVPLGIANIIGRSTFPSVEGYLALSLCVAFIASASVFTHFHSQPEIKRLLEEELRNNTRLTTAFGINIDTIAGSTVFQMAHYILTDTTLIWVAINSYFAILAMCTKLIIKLTFKELSRQEEVAARQAFLSYILLTIVYLSVVTGPQKGHRVMPWMIWGGVCGFLSHLQFVTCQRLKYTSPSCDRGSQRVSFISLFLFFVSIAMTFMVSRFQQHLEWQPAVLLYFDCLLAVFRSTYILFRCISSSRVFSFNPDSVRHFNYWLELATNFACELLQFLSYAQLFVFAPGLNLTSIFFLYHMKLTYNCMREQLGRHRTHKKIFEHIESAYPSVKAANSDDRCIVCWELLGTSRRLPCSHQFHDWCLMWWLAQDSSCPTCRYVIPSPQEEASRTDSGNGNTMFRFNGRTFGFFTLPSFTVEVGSSFGNIFGRAAEPTQEQLQSMLETVLEMFPQMSPETILADLRQSGSAQSTIENILEGRMGLNASLIPGVLDEDLSDDTDNELEYEEHVEVVQEPDRTRQRTWTKLSSSSGEAELSYYEIQRANMIETYRRKYLASDKAADLRAMGITE</sequence>
<keyword id="KW-0325">Glycoprotein</keyword>
<keyword id="KW-0472">Membrane</keyword>
<keyword id="KW-0479">Metal-binding</keyword>
<keyword id="KW-1185">Reference proteome</keyword>
<keyword id="KW-0812">Transmembrane</keyword>
<keyword id="KW-1133">Transmembrane helix</keyword>
<keyword id="KW-0862">Zinc</keyword>
<keyword id="KW-0863">Zinc-finger</keyword>
<organism>
    <name type="scientific">Caenorhabditis briggsae</name>
    <dbReference type="NCBI Taxonomy" id="6238"/>
    <lineage>
        <taxon>Eukaryota</taxon>
        <taxon>Metazoa</taxon>
        <taxon>Ecdysozoa</taxon>
        <taxon>Nematoda</taxon>
        <taxon>Chromadorea</taxon>
        <taxon>Rhabditida</taxon>
        <taxon>Rhabditina</taxon>
        <taxon>Rhabditomorpha</taxon>
        <taxon>Rhabditoidea</taxon>
        <taxon>Rhabditidae</taxon>
        <taxon>Peloderinae</taxon>
        <taxon>Caenorhabditis</taxon>
    </lineage>
</organism>
<evidence type="ECO:0000250" key="1">
    <source>
        <dbReference type="UniProtKB" id="P90859"/>
    </source>
</evidence>
<evidence type="ECO:0000255" key="2"/>
<evidence type="ECO:0000255" key="3">
    <source>
        <dbReference type="PROSITE-ProRule" id="PRU00175"/>
    </source>
</evidence>
<evidence type="ECO:0000255" key="4">
    <source>
        <dbReference type="PROSITE-ProRule" id="PRU00468"/>
    </source>
</evidence>
<evidence type="ECO:0000312" key="5">
    <source>
        <dbReference type="EMBL" id="CAP24624.1"/>
    </source>
</evidence>
<feature type="chain" id="PRO_0000370218" description="E3 ubiquitin-protein ligase hrd-like protein 1">
    <location>
        <begin position="1"/>
        <end position="578"/>
    </location>
</feature>
<feature type="transmembrane region" description="Helical" evidence="2">
    <location>
        <begin position="32"/>
        <end position="52"/>
    </location>
</feature>
<feature type="transmembrane region" description="Helical" evidence="2">
    <location>
        <begin position="76"/>
        <end position="96"/>
    </location>
</feature>
<feature type="transmembrane region" description="Helical" evidence="2">
    <location>
        <begin position="101"/>
        <end position="121"/>
    </location>
</feature>
<feature type="transmembrane region" description="Helical" evidence="2">
    <location>
        <begin position="134"/>
        <end position="154"/>
    </location>
</feature>
<feature type="transmembrane region" description="Helical" evidence="2">
    <location>
        <begin position="163"/>
        <end position="183"/>
    </location>
</feature>
<feature type="transmembrane region" description="Helical" evidence="2">
    <location>
        <begin position="202"/>
        <end position="222"/>
    </location>
</feature>
<feature type="transmembrane region" description="Helical" evidence="2">
    <location>
        <begin position="230"/>
        <end position="250"/>
    </location>
</feature>
<feature type="transmembrane region" description="Helical" evidence="2">
    <location>
        <begin position="286"/>
        <end position="306"/>
    </location>
</feature>
<feature type="domain" description="CUE" evidence="4">
    <location>
        <begin position="447"/>
        <end position="489"/>
    </location>
</feature>
<feature type="zinc finger region" description="RING-type; atypical" evidence="3">
    <location>
        <begin position="350"/>
        <end position="388"/>
    </location>
</feature>
<feature type="glycosylation site" description="N-linked (GlcNAc...) asparagine" evidence="2">
    <location>
        <position position="68"/>
    </location>
</feature>
<feature type="glycosylation site" description="N-linked (GlcNAc...) asparagine" evidence="2">
    <location>
        <position position="492"/>
    </location>
</feature>
<comment type="function">
    <text evidence="1">Proposed to have a role in neuroprotection.</text>
</comment>
<comment type="subcellular location">
    <subcellularLocation>
        <location evidence="2">Membrane</location>
        <topology evidence="2">Multi-pass membrane protein</topology>
    </subcellularLocation>
</comment>
<accession>A8WWR3</accession>
<name>HRDL1_CAEBR</name>
<gene>
    <name evidence="5" type="primary">hrdl-1</name>
    <name type="ORF">CBG03795</name>
</gene>
<proteinExistence type="inferred from homology"/>
<reference evidence="5" key="1">
    <citation type="journal article" date="2003" name="PLoS Biol.">
        <title>The genome sequence of Caenorhabditis briggsae: a platform for comparative genomics.</title>
        <authorList>
            <person name="Stein L.D."/>
            <person name="Bao Z."/>
            <person name="Blasiar D."/>
            <person name="Blumenthal T."/>
            <person name="Brent M.R."/>
            <person name="Chen N."/>
            <person name="Chinwalla A."/>
            <person name="Clarke L."/>
            <person name="Clee C."/>
            <person name="Coghlan A."/>
            <person name="Coulson A."/>
            <person name="D'Eustachio P."/>
            <person name="Fitch D.H.A."/>
            <person name="Fulton L.A."/>
            <person name="Fulton R.E."/>
            <person name="Griffiths-Jones S."/>
            <person name="Harris T.W."/>
            <person name="Hillier L.W."/>
            <person name="Kamath R."/>
            <person name="Kuwabara P.E."/>
            <person name="Mardis E.R."/>
            <person name="Marra M.A."/>
            <person name="Miner T.L."/>
            <person name="Minx P."/>
            <person name="Mullikin J.C."/>
            <person name="Plumb R.W."/>
            <person name="Rogers J."/>
            <person name="Schein J.E."/>
            <person name="Sohrmann M."/>
            <person name="Spieth J."/>
            <person name="Stajich J.E."/>
            <person name="Wei C."/>
            <person name="Willey D."/>
            <person name="Wilson R.K."/>
            <person name="Durbin R.M."/>
            <person name="Waterston R.H."/>
        </authorList>
    </citation>
    <scope>NUCLEOTIDE SEQUENCE [LARGE SCALE GENOMIC DNA]</scope>
    <source>
        <strain evidence="5">AF16</strain>
    </source>
</reference>